<reference key="1">
    <citation type="journal article" date="1993" name="Gene">
        <title>Sequence analysis of the phage 21 genes for prohead assembly and head completion.</title>
        <authorList>
            <person name="Smith M.P."/>
            <person name="Feiss M."/>
        </authorList>
    </citation>
    <scope>NUCLEOTIDE SEQUENCE [GENOMIC DNA]</scope>
</reference>
<sequence>MRRNLSHIIAAAFNEPLLLEPAYARVFFCALGREMGAASLSVPQQQVQFDAPGMLAETDEYMAGGKRPARVYRVVNGIAVLPVTGTLVHRLGGMRPFSGMTGYDGIVACLQQAMADSQVRGVLLDIDSPGGQAAGAFDCADMIYRLRQQKPVWALCNDTACSAAMLLASACSRRLVTQTSRIGSIGVMMSHVSYAGHLAQAGVDITLIYSGAHKVDGNQFEALPAEVRQDMQQRIDAARRMFAEKVAMYTGLSVDAVTGTEAAVFEGQSGIEAGLADELINASDAISVMATALNSNVRGGTMPQLTATEAAAQENQRVMGILTCQEAKGREQLATMLAGQQGMSVEQARAILAAAAPQQPVASTQSEADRIMVCEEANGREQLAATLAAMPEMTVEKARPILAASPQADAGPSLRDQIMALDEAKGAEAQAEQLAACPGMTVESARAVLAAGSGKAEPVSASTTAMFEHFMANHSPAAVQGGVAQTSADGDADVKMLMAMP</sequence>
<comment type="function">
    <text>Scaffold protein GP6 forms the scaffold for capsid assembly and is required for binding of the 5 and 4 protein products. It is subsequently lost from the head during maturation.</text>
</comment>
<comment type="similarity">
    <text evidence="2">Belongs to the peptidase S49 family.</text>
</comment>
<comment type="sequence caution" evidence="2">
    <conflict type="erroneous initiation">
        <sequence resource="EMBL-CDS" id="AAA32344"/>
    </conflict>
</comment>
<proteinExistence type="inferred from homology"/>
<organismHost>
    <name type="scientific">Escherichia coli</name>
    <dbReference type="NCBI Taxonomy" id="562"/>
</organismHost>
<keyword id="KW-0378">Hydrolase</keyword>
<keyword id="KW-0645">Protease</keyword>
<keyword id="KW-0677">Repeat</keyword>
<keyword id="KW-0720">Serine protease</keyword>
<keyword id="KW-0118">Viral capsid assembly</keyword>
<keyword id="KW-1188">Viral release from host cell</keyword>
<feature type="chain" id="PRO_0000027360" description="Head-tail preconnector protein GP5">
    <location>
        <begin position="1"/>
        <end position="501"/>
    </location>
</feature>
<feature type="chain" id="PRO_0000027361" description="Scaffold protein GP6">
    <location>
        <begin position="302"/>
        <end position="501"/>
    </location>
</feature>
<feature type="repeat" description="TRI 1">
    <location>
        <begin position="321"/>
        <end position="358"/>
    </location>
</feature>
<feature type="repeat" description="TRI 2">
    <location>
        <begin position="371"/>
        <end position="417"/>
    </location>
</feature>
<feature type="repeat" description="TRI 3">
    <location>
        <begin position="418"/>
        <end position="455"/>
    </location>
</feature>
<feature type="region of interest" description="3 X 38 AA repeats">
    <location>
        <begin position="321"/>
        <end position="455"/>
    </location>
</feature>
<feature type="active site" description="Nucleophile" evidence="1">
    <location>
        <position position="162"/>
    </location>
</feature>
<feature type="active site" description="Proton donor/acceptor" evidence="1">
    <location>
        <position position="214"/>
    </location>
</feature>
<evidence type="ECO:0000250" key="1"/>
<evidence type="ECO:0000305" key="2"/>
<name>VG05_BPP21</name>
<dbReference type="EC" id="3.4.21.-"/>
<dbReference type="EMBL" id="M81255">
    <property type="protein sequence ID" value="AAA32343.1"/>
    <property type="molecule type" value="Genomic_DNA"/>
</dbReference>
<dbReference type="EMBL" id="M81255">
    <property type="protein sequence ID" value="AAA32344.1"/>
    <property type="status" value="ALT_INIT"/>
    <property type="molecule type" value="Genomic_DNA"/>
</dbReference>
<dbReference type="SMR" id="P36273"/>
<dbReference type="MEROPS" id="S49.003"/>
<dbReference type="GO" id="GO:0008236">
    <property type="term" value="F:serine-type peptidase activity"/>
    <property type="evidence" value="ECO:0007669"/>
    <property type="project" value="UniProtKB-KW"/>
</dbReference>
<dbReference type="GO" id="GO:0006508">
    <property type="term" value="P:proteolysis"/>
    <property type="evidence" value="ECO:0007669"/>
    <property type="project" value="UniProtKB-KW"/>
</dbReference>
<dbReference type="CDD" id="cd07022">
    <property type="entry name" value="S49_Sppa_36K_type"/>
    <property type="match status" value="1"/>
</dbReference>
<dbReference type="Gene3D" id="3.90.226.10">
    <property type="entry name" value="2-enoyl-CoA Hydratase, Chain A, domain 1"/>
    <property type="match status" value="1"/>
</dbReference>
<dbReference type="InterPro" id="IPR029045">
    <property type="entry name" value="ClpP/crotonase-like_dom_sf"/>
</dbReference>
<dbReference type="InterPro" id="IPR002142">
    <property type="entry name" value="Peptidase_S49"/>
</dbReference>
<dbReference type="InterPro" id="IPR033855">
    <property type="entry name" value="Protein_C"/>
</dbReference>
<dbReference type="PANTHER" id="PTHR33209:SF1">
    <property type="entry name" value="PEPTIDASE S49 DOMAIN-CONTAINING PROTEIN"/>
    <property type="match status" value="1"/>
</dbReference>
<dbReference type="PANTHER" id="PTHR33209">
    <property type="entry name" value="PROTEASE 4"/>
    <property type="match status" value="1"/>
</dbReference>
<dbReference type="Pfam" id="PF01343">
    <property type="entry name" value="Peptidase_S49"/>
    <property type="match status" value="1"/>
</dbReference>
<dbReference type="SUPFAM" id="SSF52096">
    <property type="entry name" value="ClpP/crotonase"/>
    <property type="match status" value="1"/>
</dbReference>
<gene>
    <name type="primary">5</name>
</gene>
<gene>
    <name type="primary">6</name>
</gene>
<accession>P36273</accession>
<accession>Q38454</accession>
<organism>
    <name type="scientific">Enterobacteria phage P21</name>
    <name type="common">Bacteriophage 21</name>
    <name type="synonym">Bacteriophage P21</name>
    <dbReference type="NCBI Taxonomy" id="10711"/>
    <lineage>
        <taxon>Viruses</taxon>
        <taxon>Duplodnaviria</taxon>
        <taxon>Heunggongvirae</taxon>
        <taxon>Uroviricota</taxon>
        <taxon>Caudoviricetes</taxon>
        <taxon>Lambdavirus</taxon>
        <taxon>Lambdavirus lambda</taxon>
    </lineage>
</organism>
<protein>
    <recommendedName>
        <fullName>Head-tail preconnector protein GP5</fullName>
        <ecNumber>3.4.21.-</ecNumber>
    </recommendedName>
    <alternativeName>
        <fullName>Putative peptidase GP5</fullName>
    </alternativeName>
    <component>
        <recommendedName>
            <fullName>Scaffold protein GP6</fullName>
        </recommendedName>
        <alternativeName>
            <fullName>Head protein GP6</fullName>
        </alternativeName>
    </component>
</protein>